<proteinExistence type="inferred from homology"/>
<organism>
    <name type="scientific">Macaca mulatta</name>
    <name type="common">Rhesus macaque</name>
    <dbReference type="NCBI Taxonomy" id="9544"/>
    <lineage>
        <taxon>Eukaryota</taxon>
        <taxon>Metazoa</taxon>
        <taxon>Chordata</taxon>
        <taxon>Craniata</taxon>
        <taxon>Vertebrata</taxon>
        <taxon>Euteleostomi</taxon>
        <taxon>Mammalia</taxon>
        <taxon>Eutheria</taxon>
        <taxon>Euarchontoglires</taxon>
        <taxon>Primates</taxon>
        <taxon>Haplorrhini</taxon>
        <taxon>Catarrhini</taxon>
        <taxon>Cercopithecidae</taxon>
        <taxon>Cercopithecinae</taxon>
        <taxon>Macaca</taxon>
    </lineage>
</organism>
<comment type="subunit">
    <text evidence="2">Component of the mitochondrial ribosome small subunit (28S) which comprises a 12S rRNA and about 30 distinct proteins.</text>
</comment>
<comment type="subcellular location">
    <subcellularLocation>
        <location evidence="2">Mitochondrion</location>
    </subcellularLocation>
</comment>
<comment type="similarity">
    <text evidence="4">Belongs to the bacterial ribosomal protein bS18 family. Mitochondrion-specific ribosomal protein mS40 subfamily.</text>
</comment>
<feature type="transit peptide" description="Mitochondrion" evidence="1">
    <location>
        <begin position="1"/>
        <end position="35"/>
    </location>
</feature>
<feature type="chain" id="PRO_0000317426" description="Small ribosomal subunit protein mS40">
    <location>
        <begin position="36"/>
        <end position="258"/>
    </location>
</feature>
<feature type="region of interest" description="Disordered" evidence="3">
    <location>
        <begin position="218"/>
        <end position="258"/>
    </location>
</feature>
<feature type="compositionally biased region" description="Pro residues" evidence="3">
    <location>
        <begin position="229"/>
        <end position="242"/>
    </location>
</feature>
<feature type="compositionally biased region" description="Polar residues" evidence="3">
    <location>
        <begin position="248"/>
        <end position="258"/>
    </location>
</feature>
<feature type="modified residue" description="Phosphoserine" evidence="2">
    <location>
        <position position="38"/>
    </location>
</feature>
<feature type="modified residue" description="Phosphoserine" evidence="2">
    <location>
        <position position="49"/>
    </location>
</feature>
<keyword id="KW-0496">Mitochondrion</keyword>
<keyword id="KW-0597">Phosphoprotein</keyword>
<keyword id="KW-1185">Reference proteome</keyword>
<keyword id="KW-0687">Ribonucleoprotein</keyword>
<keyword id="KW-0689">Ribosomal protein</keyword>
<keyword id="KW-0809">Transit peptide</keyword>
<reference key="1">
    <citation type="journal article" date="2004" name="Mol. Biol. Evol.">
        <title>Rhesus macaque class I duplicon structures, organization, and evolution within the alpha block of the major histocompatibility complex.</title>
        <authorList>
            <person name="Kulski J.K."/>
            <person name="Anzai T."/>
            <person name="Shiina T."/>
            <person name="Inoko H."/>
        </authorList>
    </citation>
    <scope>NUCLEOTIDE SEQUENCE [LARGE SCALE GENOMIC DNA]</scope>
</reference>
<dbReference type="EMBL" id="AB128049">
    <property type="protein sequence ID" value="BAD69764.1"/>
    <property type="molecule type" value="Genomic_DNA"/>
</dbReference>
<dbReference type="RefSeq" id="NP_001098635.1">
    <property type="nucleotide sequence ID" value="NM_001105165.1"/>
</dbReference>
<dbReference type="SMR" id="Q5TM62"/>
<dbReference type="FunCoup" id="Q5TM62">
    <property type="interactions" value="664"/>
</dbReference>
<dbReference type="STRING" id="9544.ENSMMUP00000063458"/>
<dbReference type="PaxDb" id="9544-ENSMMUP00000008591"/>
<dbReference type="Ensembl" id="ENSMMUT00000102770.1">
    <property type="protein sequence ID" value="ENSMMUP00000063458.1"/>
    <property type="gene ID" value="ENSMMUG00000006525.4"/>
</dbReference>
<dbReference type="GeneID" id="713694"/>
<dbReference type="KEGG" id="mcc:713694"/>
<dbReference type="CTD" id="28973"/>
<dbReference type="VEuPathDB" id="HostDB:ENSMMUG00000006525"/>
<dbReference type="VGNC" id="VGNC:74768">
    <property type="gene designation" value="MRPS18B"/>
</dbReference>
<dbReference type="eggNOG" id="KOG4021">
    <property type="taxonomic scope" value="Eukaryota"/>
</dbReference>
<dbReference type="GeneTree" id="ENSGT00390000010554"/>
<dbReference type="InParanoid" id="Q5TM62"/>
<dbReference type="OMA" id="RSAYGVQ"/>
<dbReference type="OrthoDB" id="21463at2759"/>
<dbReference type="Proteomes" id="UP000006718">
    <property type="component" value="Chromosome 4"/>
</dbReference>
<dbReference type="Bgee" id="ENSMMUG00000006525">
    <property type="expression patterns" value="Expressed in hindlimb stylopod muscle and 21 other cell types or tissues"/>
</dbReference>
<dbReference type="ExpressionAtlas" id="Q5TM62">
    <property type="expression patterns" value="baseline"/>
</dbReference>
<dbReference type="GO" id="GO:0030054">
    <property type="term" value="C:cell junction"/>
    <property type="evidence" value="ECO:0007669"/>
    <property type="project" value="Ensembl"/>
</dbReference>
<dbReference type="GO" id="GO:0005763">
    <property type="term" value="C:mitochondrial small ribosomal subunit"/>
    <property type="evidence" value="ECO:0000250"/>
    <property type="project" value="UniProtKB"/>
</dbReference>
<dbReference type="GO" id="GO:0005739">
    <property type="term" value="C:mitochondrion"/>
    <property type="evidence" value="ECO:0000318"/>
    <property type="project" value="GO_Central"/>
</dbReference>
<dbReference type="GO" id="GO:0005654">
    <property type="term" value="C:nucleoplasm"/>
    <property type="evidence" value="ECO:0007669"/>
    <property type="project" value="Ensembl"/>
</dbReference>
<dbReference type="GO" id="GO:0003735">
    <property type="term" value="F:structural constituent of ribosome"/>
    <property type="evidence" value="ECO:0007669"/>
    <property type="project" value="InterPro"/>
</dbReference>
<dbReference type="GO" id="GO:0032543">
    <property type="term" value="P:mitochondrial translation"/>
    <property type="evidence" value="ECO:0007669"/>
    <property type="project" value="InterPro"/>
</dbReference>
<dbReference type="FunFam" id="4.10.640.10:FF:000008">
    <property type="entry name" value="28S ribosomal protein S18b, mitochondrial"/>
    <property type="match status" value="1"/>
</dbReference>
<dbReference type="Gene3D" id="4.10.640.10">
    <property type="entry name" value="Ribosomal protein S18"/>
    <property type="match status" value="1"/>
</dbReference>
<dbReference type="InterPro" id="IPR040054">
    <property type="entry name" value="MRPS18B"/>
</dbReference>
<dbReference type="InterPro" id="IPR001648">
    <property type="entry name" value="Ribosomal_bS18"/>
</dbReference>
<dbReference type="InterPro" id="IPR036870">
    <property type="entry name" value="Ribosomal_bS18_sf"/>
</dbReference>
<dbReference type="PANTHER" id="PTHR13329">
    <property type="entry name" value="MITOCHONDRIAL RIBOSOMAL PROTEIN S18B"/>
    <property type="match status" value="1"/>
</dbReference>
<dbReference type="PANTHER" id="PTHR13329:SF2">
    <property type="entry name" value="SMALL RIBOSOMAL SUBUNIT PROTEIN MS40"/>
    <property type="match status" value="1"/>
</dbReference>
<dbReference type="Pfam" id="PF01084">
    <property type="entry name" value="Ribosomal_S18"/>
    <property type="match status" value="1"/>
</dbReference>
<dbReference type="SUPFAM" id="SSF46911">
    <property type="entry name" value="Ribosomal protein S18"/>
    <property type="match status" value="1"/>
</dbReference>
<gene>
    <name type="primary">MRPS18B</name>
</gene>
<evidence type="ECO:0000250" key="1">
    <source>
        <dbReference type="UniProtKB" id="P82918"/>
    </source>
</evidence>
<evidence type="ECO:0000250" key="2">
    <source>
        <dbReference type="UniProtKB" id="Q9Y676"/>
    </source>
</evidence>
<evidence type="ECO:0000256" key="3">
    <source>
        <dbReference type="SAM" id="MobiDB-lite"/>
    </source>
</evidence>
<evidence type="ECO:0000305" key="4"/>
<name>RT18B_MACMU</name>
<protein>
    <recommendedName>
        <fullName evidence="4">Small ribosomal subunit protein mS40</fullName>
    </recommendedName>
    <alternativeName>
        <fullName>28S ribosomal protein S18-2, mitochondrial</fullName>
        <shortName>MRP-S18-2</shortName>
    </alternativeName>
    <alternativeName>
        <fullName>28S ribosomal protein S18b, mitochondrial</fullName>
        <shortName>MRP-S18-b</shortName>
        <shortName>Mrps18-b</shortName>
        <shortName>S18mt-b</shortName>
    </alternativeName>
</protein>
<sequence length="258" mass="29439">MAASVLNTLLRRLPMLSLFRGAHRVQVPLQTLCTKPPSEEDSLSPVPISPYKDEPWKYLESEEYQERYGSRPVWADYRRNHKGGVPPQRTRKTCIRGNKVAGNPCPICRDHKLHVDFRNVKLLEQFVCAHTGIIFHSLYTGVCVKQHKRLTQAIQKARDHGLLIYHIPQVEPRDRDFSISHGAVSATPPAPTLISGDPWYPWYNWKQPPERELSRLRRLYQGHLREESGPPPESMPKMPPTAPAEASFTGQTDPQSAL</sequence>
<accession>Q5TM62</accession>